<feature type="chain" id="PRO_1000124606" description="Thiazole synthase">
    <location>
        <begin position="1"/>
        <end position="257"/>
    </location>
</feature>
<feature type="active site" description="Schiff-base intermediate with DXP" evidence="1">
    <location>
        <position position="96"/>
    </location>
</feature>
<feature type="binding site" evidence="1">
    <location>
        <position position="157"/>
    </location>
    <ligand>
        <name>1-deoxy-D-xylulose 5-phosphate</name>
        <dbReference type="ChEBI" id="CHEBI:57792"/>
    </ligand>
</feature>
<feature type="binding site" evidence="1">
    <location>
        <begin position="184"/>
        <end position="185"/>
    </location>
    <ligand>
        <name>1-deoxy-D-xylulose 5-phosphate</name>
        <dbReference type="ChEBI" id="CHEBI:57792"/>
    </ligand>
</feature>
<feature type="binding site" evidence="1">
    <location>
        <begin position="206"/>
        <end position="207"/>
    </location>
    <ligand>
        <name>1-deoxy-D-xylulose 5-phosphate</name>
        <dbReference type="ChEBI" id="CHEBI:57792"/>
    </ligand>
</feature>
<protein>
    <recommendedName>
        <fullName evidence="1">Thiazole synthase</fullName>
        <ecNumber evidence="1">2.8.1.10</ecNumber>
    </recommendedName>
</protein>
<reference key="1">
    <citation type="journal article" date="2004" name="Proc. Natl. Acad. Sci. U.S.A.">
        <title>The louse-borne human pathogen Bartonella quintana is a genomic derivative of the zoonotic agent Bartonella henselae.</title>
        <authorList>
            <person name="Alsmark U.C.M."/>
            <person name="Frank A.C."/>
            <person name="Karlberg E.O."/>
            <person name="Legault B.-A."/>
            <person name="Ardell D.H."/>
            <person name="Canbaeck B."/>
            <person name="Eriksson A.-S."/>
            <person name="Naeslund A.K."/>
            <person name="Handley S.A."/>
            <person name="Huvet M."/>
            <person name="La Scola B."/>
            <person name="Holmberg M."/>
            <person name="Andersson S.G.E."/>
        </authorList>
    </citation>
    <scope>NUCLEOTIDE SEQUENCE [LARGE SCALE GENOMIC DNA]</scope>
    <source>
        <strain>ATCC 49882 / DSM 28221 / CCUG 30454 / Houston 1</strain>
    </source>
</reference>
<dbReference type="EC" id="2.8.1.10" evidence="1"/>
<dbReference type="EMBL" id="BX897699">
    <property type="protein sequence ID" value="CAF27296.1"/>
    <property type="molecule type" value="Genomic_DNA"/>
</dbReference>
<dbReference type="RefSeq" id="WP_011180419.1">
    <property type="nucleotide sequence ID" value="NZ_LRIJ02000001.1"/>
</dbReference>
<dbReference type="SMR" id="Q6G480"/>
<dbReference type="PaxDb" id="283166-BH04880"/>
<dbReference type="EnsemblBacteria" id="CAF27296">
    <property type="protein sequence ID" value="CAF27296"/>
    <property type="gene ID" value="BH04880"/>
</dbReference>
<dbReference type="KEGG" id="bhe:BH04880"/>
<dbReference type="eggNOG" id="COG2022">
    <property type="taxonomic scope" value="Bacteria"/>
</dbReference>
<dbReference type="OrthoDB" id="9805935at2"/>
<dbReference type="UniPathway" id="UPA00060"/>
<dbReference type="Proteomes" id="UP000000421">
    <property type="component" value="Chromosome"/>
</dbReference>
<dbReference type="GO" id="GO:0005737">
    <property type="term" value="C:cytoplasm"/>
    <property type="evidence" value="ECO:0007669"/>
    <property type="project" value="UniProtKB-SubCell"/>
</dbReference>
<dbReference type="GO" id="GO:1990107">
    <property type="term" value="F:thiazole synthase activity"/>
    <property type="evidence" value="ECO:0007669"/>
    <property type="project" value="UniProtKB-EC"/>
</dbReference>
<dbReference type="GO" id="GO:0009229">
    <property type="term" value="P:thiamine diphosphate biosynthetic process"/>
    <property type="evidence" value="ECO:0007669"/>
    <property type="project" value="UniProtKB-UniRule"/>
</dbReference>
<dbReference type="CDD" id="cd04728">
    <property type="entry name" value="ThiG"/>
    <property type="match status" value="1"/>
</dbReference>
<dbReference type="Gene3D" id="3.20.20.70">
    <property type="entry name" value="Aldolase class I"/>
    <property type="match status" value="1"/>
</dbReference>
<dbReference type="HAMAP" id="MF_00443">
    <property type="entry name" value="ThiG"/>
    <property type="match status" value="1"/>
</dbReference>
<dbReference type="InterPro" id="IPR013785">
    <property type="entry name" value="Aldolase_TIM"/>
</dbReference>
<dbReference type="InterPro" id="IPR033983">
    <property type="entry name" value="Thiazole_synthase_ThiG"/>
</dbReference>
<dbReference type="InterPro" id="IPR008867">
    <property type="entry name" value="ThiG"/>
</dbReference>
<dbReference type="PANTHER" id="PTHR34266">
    <property type="entry name" value="THIAZOLE SYNTHASE"/>
    <property type="match status" value="1"/>
</dbReference>
<dbReference type="PANTHER" id="PTHR34266:SF2">
    <property type="entry name" value="THIAZOLE SYNTHASE"/>
    <property type="match status" value="1"/>
</dbReference>
<dbReference type="Pfam" id="PF05690">
    <property type="entry name" value="ThiG"/>
    <property type="match status" value="1"/>
</dbReference>
<dbReference type="SUPFAM" id="SSF110399">
    <property type="entry name" value="ThiG-like"/>
    <property type="match status" value="1"/>
</dbReference>
<organism>
    <name type="scientific">Bartonella henselae (strain ATCC 49882 / DSM 28221 / CCUG 30454 / Houston 1)</name>
    <name type="common">Rochalimaea henselae</name>
    <dbReference type="NCBI Taxonomy" id="283166"/>
    <lineage>
        <taxon>Bacteria</taxon>
        <taxon>Pseudomonadati</taxon>
        <taxon>Pseudomonadota</taxon>
        <taxon>Alphaproteobacteria</taxon>
        <taxon>Hyphomicrobiales</taxon>
        <taxon>Bartonellaceae</taxon>
        <taxon>Bartonella</taxon>
    </lineage>
</organism>
<evidence type="ECO:0000255" key="1">
    <source>
        <dbReference type="HAMAP-Rule" id="MF_00443"/>
    </source>
</evidence>
<sequence>MLNLYGHKFSSRLMLGTAQYPSPAILRDAIHKSNTEIVTVSLRRETAGGKQGGQFWQFLKELDITVLPNTAGCYTVKEAVTTAKLARDLFKTSWIKLEIIGNPDTLQPNVFSLVEAAKILNSEGFKIFAYTTDDLIVAEKLLDVGCQVIMPWCAPIGSAKGPHNTDGLRSIRAYLPDVTLVIDAGIGRPSHATVAMELGYDAVLLNTAVAKAADPVLMAEAFSKAIQAGRMGYKAGILEARNVAVPSTPIIGKAVFS</sequence>
<gene>
    <name evidence="1" type="primary">thiG</name>
    <name type="ordered locus">BH04880</name>
</gene>
<comment type="function">
    <text evidence="1">Catalyzes the rearrangement of 1-deoxy-D-xylulose 5-phosphate (DXP) to produce the thiazole phosphate moiety of thiamine. Sulfur is provided by the thiocarboxylate moiety of the carrier protein ThiS. In vitro, sulfur can be provided by H(2)S.</text>
</comment>
<comment type="catalytic activity">
    <reaction evidence="1">
        <text>[ThiS sulfur-carrier protein]-C-terminal-Gly-aminoethanethioate + 2-iminoacetate + 1-deoxy-D-xylulose 5-phosphate = [ThiS sulfur-carrier protein]-C-terminal Gly-Gly + 2-[(2R,5Z)-2-carboxy-4-methylthiazol-5(2H)-ylidene]ethyl phosphate + 2 H2O + H(+)</text>
        <dbReference type="Rhea" id="RHEA:26297"/>
        <dbReference type="Rhea" id="RHEA-COMP:12909"/>
        <dbReference type="Rhea" id="RHEA-COMP:19908"/>
        <dbReference type="ChEBI" id="CHEBI:15377"/>
        <dbReference type="ChEBI" id="CHEBI:15378"/>
        <dbReference type="ChEBI" id="CHEBI:57792"/>
        <dbReference type="ChEBI" id="CHEBI:62899"/>
        <dbReference type="ChEBI" id="CHEBI:77846"/>
        <dbReference type="ChEBI" id="CHEBI:90778"/>
        <dbReference type="ChEBI" id="CHEBI:232372"/>
        <dbReference type="EC" id="2.8.1.10"/>
    </reaction>
</comment>
<comment type="pathway">
    <text evidence="1">Cofactor biosynthesis; thiamine diphosphate biosynthesis.</text>
</comment>
<comment type="subunit">
    <text evidence="1">Homotetramer. Forms heterodimers with either ThiH or ThiS.</text>
</comment>
<comment type="subcellular location">
    <subcellularLocation>
        <location evidence="1">Cytoplasm</location>
    </subcellularLocation>
</comment>
<comment type="similarity">
    <text evidence="1">Belongs to the ThiG family.</text>
</comment>
<proteinExistence type="inferred from homology"/>
<accession>Q6G480</accession>
<keyword id="KW-0963">Cytoplasm</keyword>
<keyword id="KW-0704">Schiff base</keyword>
<keyword id="KW-0784">Thiamine biosynthesis</keyword>
<keyword id="KW-0808">Transferase</keyword>
<name>THIG_BARHE</name>